<protein>
    <recommendedName>
        <fullName evidence="1">Glycerol-1-phosphate dehydrogenase [NAD(P)+]</fullName>
        <shortName evidence="1">G1P dehydrogenase</shortName>
        <shortName evidence="1">G1PDH</shortName>
        <ecNumber evidence="1">1.1.1.261</ecNumber>
    </recommendedName>
    <alternativeName>
        <fullName evidence="1">Enantiomeric glycerophosphate synthase</fullName>
    </alternativeName>
    <alternativeName>
        <fullName evidence="1">sn-glycerol-1-phosphate dehydrogenase</fullName>
    </alternativeName>
</protein>
<keyword id="KW-0963">Cytoplasm</keyword>
<keyword id="KW-0444">Lipid biosynthesis</keyword>
<keyword id="KW-0443">Lipid metabolism</keyword>
<keyword id="KW-0479">Metal-binding</keyword>
<keyword id="KW-0520">NAD</keyword>
<keyword id="KW-0521">NADP</keyword>
<keyword id="KW-0560">Oxidoreductase</keyword>
<keyword id="KW-0594">Phospholipid biosynthesis</keyword>
<keyword id="KW-1208">Phospholipid metabolism</keyword>
<keyword id="KW-0862">Zinc</keyword>
<evidence type="ECO:0000255" key="1">
    <source>
        <dbReference type="HAMAP-Rule" id="MF_00497"/>
    </source>
</evidence>
<reference key="1">
    <citation type="submission" date="2008-03" db="EMBL/GenBank/DDBJ databases">
        <title>Complete sequence of Thermoproteus neutrophilus V24Sta.</title>
        <authorList>
            <consortium name="US DOE Joint Genome Institute"/>
            <person name="Copeland A."/>
            <person name="Lucas S."/>
            <person name="Lapidus A."/>
            <person name="Glavina del Rio T."/>
            <person name="Dalin E."/>
            <person name="Tice H."/>
            <person name="Bruce D."/>
            <person name="Goodwin L."/>
            <person name="Pitluck S."/>
            <person name="Sims D."/>
            <person name="Brettin T."/>
            <person name="Detter J.C."/>
            <person name="Han C."/>
            <person name="Kuske C.R."/>
            <person name="Schmutz J."/>
            <person name="Larimer F."/>
            <person name="Land M."/>
            <person name="Hauser L."/>
            <person name="Kyrpides N."/>
            <person name="Mikhailova N."/>
            <person name="Biddle J.F."/>
            <person name="Zhang Z."/>
            <person name="Fitz-Gibbon S.T."/>
            <person name="Lowe T.M."/>
            <person name="Saltikov C."/>
            <person name="House C.H."/>
            <person name="Richardson P."/>
        </authorList>
    </citation>
    <scope>NUCLEOTIDE SEQUENCE [LARGE SCALE GENOMIC DNA]</scope>
    <source>
        <strain>DSM 2338 / JCM 9278 / NBRC 100436 / V24Sta</strain>
    </source>
</reference>
<sequence length="342" mass="36475">MKQLESFEIPRTVVFGPGAILKIPDIVSGLRVGKVLIISGKSATQQYAKTVASLLSGYSAEILKYDEVELEKSGFDLIIGVGGGRPLDMAKVYSYVHKRPLIVVPTSASHDGIASPYISYILAEKVKRYGKVVASPIAIVADTSIILSAPRRLLRAGVGDLLGKVVAVRDWQLAHRLKGEEYSEYAALLSLSSYRIVVANAGKIGNFVREEDVRALVKALIGCGVAMGIAGSSRPCSGSEHLFAHAIERRLEGAEGEAIHGELVALGAIVMAYLHGINWRRIKKAAGAVGLPTTLKQAGIDLDLAIEALTTAHTLRPDRYTILGDGLSASAARKALEDTELI</sequence>
<gene>
    <name evidence="1" type="primary">egsA</name>
    <name type="ordered locus">Tneu_0711</name>
</gene>
<organism>
    <name type="scientific">Pyrobaculum neutrophilum (strain DSM 2338 / JCM 9278 / NBRC 100436 / V24Sta)</name>
    <name type="common">Thermoproteus neutrophilus</name>
    <dbReference type="NCBI Taxonomy" id="444157"/>
    <lineage>
        <taxon>Archaea</taxon>
        <taxon>Thermoproteota</taxon>
        <taxon>Thermoprotei</taxon>
        <taxon>Thermoproteales</taxon>
        <taxon>Thermoproteaceae</taxon>
        <taxon>Pyrobaculum</taxon>
    </lineage>
</organism>
<proteinExistence type="inferred from homology"/>
<comment type="function">
    <text evidence="1">Catalyzes the NAD(P)H-dependent reduction of dihydroxyacetonephosphate (DHAP or glycerone phosphate) to glycerol 1-phosphate (G1P). The G1P thus generated is used as the glycerophosphate backbone of phospholipids in the cellular membranes of Archaea.</text>
</comment>
<comment type="catalytic activity">
    <reaction evidence="1">
        <text>sn-glycerol 1-phosphate + NAD(+) = dihydroxyacetone phosphate + NADH + H(+)</text>
        <dbReference type="Rhea" id="RHEA:21412"/>
        <dbReference type="ChEBI" id="CHEBI:15378"/>
        <dbReference type="ChEBI" id="CHEBI:57540"/>
        <dbReference type="ChEBI" id="CHEBI:57642"/>
        <dbReference type="ChEBI" id="CHEBI:57685"/>
        <dbReference type="ChEBI" id="CHEBI:57945"/>
        <dbReference type="EC" id="1.1.1.261"/>
    </reaction>
</comment>
<comment type="catalytic activity">
    <reaction evidence="1">
        <text>sn-glycerol 1-phosphate + NADP(+) = dihydroxyacetone phosphate + NADPH + H(+)</text>
        <dbReference type="Rhea" id="RHEA:21416"/>
        <dbReference type="ChEBI" id="CHEBI:15378"/>
        <dbReference type="ChEBI" id="CHEBI:57642"/>
        <dbReference type="ChEBI" id="CHEBI:57685"/>
        <dbReference type="ChEBI" id="CHEBI:57783"/>
        <dbReference type="ChEBI" id="CHEBI:58349"/>
        <dbReference type="EC" id="1.1.1.261"/>
    </reaction>
</comment>
<comment type="cofactor">
    <cofactor evidence="1">
        <name>Zn(2+)</name>
        <dbReference type="ChEBI" id="CHEBI:29105"/>
    </cofactor>
    <text evidence="1">Binds 1 zinc ion per subunit.</text>
</comment>
<comment type="pathway">
    <text evidence="1">Membrane lipid metabolism; glycerophospholipid metabolism.</text>
</comment>
<comment type="subunit">
    <text evidence="1">Homodimer.</text>
</comment>
<comment type="subcellular location">
    <subcellularLocation>
        <location evidence="1">Cytoplasm</location>
    </subcellularLocation>
</comment>
<comment type="similarity">
    <text evidence="1">Belongs to the glycerol-1-phosphate dehydrogenase family.</text>
</comment>
<dbReference type="EC" id="1.1.1.261" evidence="1"/>
<dbReference type="EMBL" id="CP001014">
    <property type="protein sequence ID" value="ACB39650.1"/>
    <property type="molecule type" value="Genomic_DNA"/>
</dbReference>
<dbReference type="RefSeq" id="WP_012350070.1">
    <property type="nucleotide sequence ID" value="NC_010525.1"/>
</dbReference>
<dbReference type="SMR" id="B1YCY7"/>
<dbReference type="STRING" id="444157.Tneu_0711"/>
<dbReference type="GeneID" id="6165664"/>
<dbReference type="KEGG" id="tne:Tneu_0711"/>
<dbReference type="eggNOG" id="arCOG00982">
    <property type="taxonomic scope" value="Archaea"/>
</dbReference>
<dbReference type="HOGENOM" id="CLU_038362_0_0_2"/>
<dbReference type="OrthoDB" id="8656at2157"/>
<dbReference type="UniPathway" id="UPA00940"/>
<dbReference type="Proteomes" id="UP000001694">
    <property type="component" value="Chromosome"/>
</dbReference>
<dbReference type="GO" id="GO:0005737">
    <property type="term" value="C:cytoplasm"/>
    <property type="evidence" value="ECO:0007669"/>
    <property type="project" value="UniProtKB-SubCell"/>
</dbReference>
<dbReference type="GO" id="GO:0106357">
    <property type="term" value="F:glycerol-1-phosphate dehydrogenase (NAD+) activity"/>
    <property type="evidence" value="ECO:0007669"/>
    <property type="project" value="RHEA"/>
</dbReference>
<dbReference type="GO" id="GO:0106358">
    <property type="term" value="F:glycerol-1-phosphate dehydrogenase (NADP+) activity"/>
    <property type="evidence" value="ECO:0007669"/>
    <property type="project" value="RHEA"/>
</dbReference>
<dbReference type="GO" id="GO:0046872">
    <property type="term" value="F:metal ion binding"/>
    <property type="evidence" value="ECO:0007669"/>
    <property type="project" value="UniProtKB-KW"/>
</dbReference>
<dbReference type="GO" id="GO:0006650">
    <property type="term" value="P:glycerophospholipid metabolic process"/>
    <property type="evidence" value="ECO:0007669"/>
    <property type="project" value="UniProtKB-UniRule"/>
</dbReference>
<dbReference type="GO" id="GO:0008654">
    <property type="term" value="P:phospholipid biosynthetic process"/>
    <property type="evidence" value="ECO:0007669"/>
    <property type="project" value="UniProtKB-KW"/>
</dbReference>
<dbReference type="CDD" id="cd08173">
    <property type="entry name" value="Gro1PDH"/>
    <property type="match status" value="1"/>
</dbReference>
<dbReference type="Gene3D" id="3.40.50.1970">
    <property type="match status" value="1"/>
</dbReference>
<dbReference type="Gene3D" id="1.20.1090.10">
    <property type="entry name" value="Dehydroquinate synthase-like - alpha domain"/>
    <property type="match status" value="1"/>
</dbReference>
<dbReference type="HAMAP" id="MF_00497_A">
    <property type="entry name" value="G1P_dehydrogenase_A"/>
    <property type="match status" value="1"/>
</dbReference>
<dbReference type="InterPro" id="IPR023002">
    <property type="entry name" value="G1P_dehydrogenase_arc"/>
</dbReference>
<dbReference type="InterPro" id="IPR032837">
    <property type="entry name" value="G1PDH"/>
</dbReference>
<dbReference type="InterPro" id="IPR016205">
    <property type="entry name" value="Glycerol_DH"/>
</dbReference>
<dbReference type="PANTHER" id="PTHR43616">
    <property type="entry name" value="GLYCEROL DEHYDROGENASE"/>
    <property type="match status" value="1"/>
</dbReference>
<dbReference type="PANTHER" id="PTHR43616:SF5">
    <property type="entry name" value="GLYCEROL DEHYDROGENASE 1"/>
    <property type="match status" value="1"/>
</dbReference>
<dbReference type="Pfam" id="PF13685">
    <property type="entry name" value="Fe-ADH_2"/>
    <property type="match status" value="1"/>
</dbReference>
<dbReference type="PIRSF" id="PIRSF000112">
    <property type="entry name" value="Glycerol_dehydrogenase"/>
    <property type="match status" value="1"/>
</dbReference>
<dbReference type="SUPFAM" id="SSF56796">
    <property type="entry name" value="Dehydroquinate synthase-like"/>
    <property type="match status" value="1"/>
</dbReference>
<name>G1PDH_PYRNV</name>
<accession>B1YCY7</accession>
<feature type="chain" id="PRO_0000350662" description="Glycerol-1-phosphate dehydrogenase [NAD(P)+]">
    <location>
        <begin position="1"/>
        <end position="342"/>
    </location>
</feature>
<feature type="binding site" evidence="1">
    <location>
        <begin position="84"/>
        <end position="88"/>
    </location>
    <ligand>
        <name>NAD(+)</name>
        <dbReference type="ChEBI" id="CHEBI:57540"/>
    </ligand>
</feature>
<feature type="binding site" evidence="1">
    <location>
        <begin position="106"/>
        <end position="109"/>
    </location>
    <ligand>
        <name>NAD(+)</name>
        <dbReference type="ChEBI" id="CHEBI:57540"/>
    </ligand>
</feature>
<feature type="binding site" evidence="1">
    <location>
        <position position="111"/>
    </location>
    <ligand>
        <name>substrate</name>
    </ligand>
</feature>
<feature type="binding site" evidence="1">
    <location>
        <position position="115"/>
    </location>
    <ligand>
        <name>NAD(+)</name>
        <dbReference type="ChEBI" id="CHEBI:57540"/>
    </ligand>
</feature>
<feature type="binding site" evidence="1">
    <location>
        <position position="160"/>
    </location>
    <ligand>
        <name>substrate</name>
    </ligand>
</feature>
<feature type="binding site" evidence="1">
    <location>
        <position position="160"/>
    </location>
    <ligand>
        <name>Zn(2+)</name>
        <dbReference type="ChEBI" id="CHEBI:29105"/>
        <note>catalytic</note>
    </ligand>
</feature>
<feature type="binding site" evidence="1">
    <location>
        <position position="241"/>
    </location>
    <ligand>
        <name>Zn(2+)</name>
        <dbReference type="ChEBI" id="CHEBI:29105"/>
        <note>catalytic</note>
    </ligand>
</feature>
<feature type="binding site" evidence="1">
    <location>
        <position position="245"/>
    </location>
    <ligand>
        <name>substrate</name>
    </ligand>
</feature>
<feature type="binding site" evidence="1">
    <location>
        <position position="260"/>
    </location>
    <ligand>
        <name>Zn(2+)</name>
        <dbReference type="ChEBI" id="CHEBI:29105"/>
        <note>catalytic</note>
    </ligand>
</feature>